<gene>
    <name evidence="1" type="primary">recA</name>
    <name type="ordered locus">Ldb0599</name>
</gene>
<reference key="1">
    <citation type="journal article" date="2006" name="Proc. Natl. Acad. Sci. U.S.A.">
        <title>The complete genome sequence of Lactobacillus bulgaricus reveals extensive and ongoing reductive evolution.</title>
        <authorList>
            <person name="van de Guchte M."/>
            <person name="Penaud S."/>
            <person name="Grimaldi C."/>
            <person name="Barbe V."/>
            <person name="Bryson K."/>
            <person name="Nicolas P."/>
            <person name="Robert C."/>
            <person name="Oztas S."/>
            <person name="Mangenot S."/>
            <person name="Couloux A."/>
            <person name="Loux V."/>
            <person name="Dervyn R."/>
            <person name="Bossy R."/>
            <person name="Bolotin A."/>
            <person name="Batto J.-M."/>
            <person name="Walunas T."/>
            <person name="Gibrat J.-F."/>
            <person name="Bessieres P."/>
            <person name="Weissenbach J."/>
            <person name="Ehrlich S.D."/>
            <person name="Maguin E."/>
        </authorList>
    </citation>
    <scope>NUCLEOTIDE SEQUENCE [LARGE SCALE GENOMIC DNA]</scope>
    <source>
        <strain>ATCC 11842 / DSM 20081 / BCRC 10696 / JCM 1002 / NBRC 13953 / NCIMB 11778 / NCTC 12712 / WDCM 00102 / Lb 14</strain>
    </source>
</reference>
<name>RECA_LACDA</name>
<dbReference type="EMBL" id="CR954253">
    <property type="protein sequence ID" value="CAI97429.1"/>
    <property type="molecule type" value="Genomic_DNA"/>
</dbReference>
<dbReference type="SMR" id="Q1GB51"/>
<dbReference type="STRING" id="390333.Ldb0599"/>
<dbReference type="KEGG" id="ldb:Ldb0599"/>
<dbReference type="PATRIC" id="fig|390333.7.peg.549"/>
<dbReference type="eggNOG" id="COG0468">
    <property type="taxonomic scope" value="Bacteria"/>
</dbReference>
<dbReference type="HOGENOM" id="CLU_040469_1_2_9"/>
<dbReference type="Proteomes" id="UP000001259">
    <property type="component" value="Chromosome"/>
</dbReference>
<dbReference type="GO" id="GO:0005829">
    <property type="term" value="C:cytosol"/>
    <property type="evidence" value="ECO:0007669"/>
    <property type="project" value="TreeGrafter"/>
</dbReference>
<dbReference type="GO" id="GO:0005524">
    <property type="term" value="F:ATP binding"/>
    <property type="evidence" value="ECO:0007669"/>
    <property type="project" value="UniProtKB-UniRule"/>
</dbReference>
<dbReference type="GO" id="GO:0016887">
    <property type="term" value="F:ATP hydrolysis activity"/>
    <property type="evidence" value="ECO:0007669"/>
    <property type="project" value="InterPro"/>
</dbReference>
<dbReference type="GO" id="GO:0140664">
    <property type="term" value="F:ATP-dependent DNA damage sensor activity"/>
    <property type="evidence" value="ECO:0007669"/>
    <property type="project" value="InterPro"/>
</dbReference>
<dbReference type="GO" id="GO:0003684">
    <property type="term" value="F:damaged DNA binding"/>
    <property type="evidence" value="ECO:0007669"/>
    <property type="project" value="UniProtKB-UniRule"/>
</dbReference>
<dbReference type="GO" id="GO:0003697">
    <property type="term" value="F:single-stranded DNA binding"/>
    <property type="evidence" value="ECO:0007669"/>
    <property type="project" value="UniProtKB-UniRule"/>
</dbReference>
<dbReference type="GO" id="GO:0006310">
    <property type="term" value="P:DNA recombination"/>
    <property type="evidence" value="ECO:0007669"/>
    <property type="project" value="UniProtKB-UniRule"/>
</dbReference>
<dbReference type="GO" id="GO:0006281">
    <property type="term" value="P:DNA repair"/>
    <property type="evidence" value="ECO:0007669"/>
    <property type="project" value="UniProtKB-UniRule"/>
</dbReference>
<dbReference type="GO" id="GO:0009432">
    <property type="term" value="P:SOS response"/>
    <property type="evidence" value="ECO:0007669"/>
    <property type="project" value="UniProtKB-UniRule"/>
</dbReference>
<dbReference type="CDD" id="cd00983">
    <property type="entry name" value="RecA"/>
    <property type="match status" value="1"/>
</dbReference>
<dbReference type="FunFam" id="3.40.50.300:FF:000087">
    <property type="entry name" value="Recombinase RecA"/>
    <property type="match status" value="1"/>
</dbReference>
<dbReference type="Gene3D" id="3.40.50.300">
    <property type="entry name" value="P-loop containing nucleotide triphosphate hydrolases"/>
    <property type="match status" value="1"/>
</dbReference>
<dbReference type="HAMAP" id="MF_00268">
    <property type="entry name" value="RecA"/>
    <property type="match status" value="1"/>
</dbReference>
<dbReference type="InterPro" id="IPR003593">
    <property type="entry name" value="AAA+_ATPase"/>
</dbReference>
<dbReference type="InterPro" id="IPR013765">
    <property type="entry name" value="DNA_recomb/repair_RecA"/>
</dbReference>
<dbReference type="InterPro" id="IPR020584">
    <property type="entry name" value="DNA_recomb/repair_RecA_CS"/>
</dbReference>
<dbReference type="InterPro" id="IPR027417">
    <property type="entry name" value="P-loop_NTPase"/>
</dbReference>
<dbReference type="InterPro" id="IPR049261">
    <property type="entry name" value="RecA-like_C"/>
</dbReference>
<dbReference type="InterPro" id="IPR049428">
    <property type="entry name" value="RecA-like_N"/>
</dbReference>
<dbReference type="InterPro" id="IPR020588">
    <property type="entry name" value="RecA_ATP-bd"/>
</dbReference>
<dbReference type="InterPro" id="IPR023400">
    <property type="entry name" value="RecA_C_sf"/>
</dbReference>
<dbReference type="InterPro" id="IPR020587">
    <property type="entry name" value="RecA_monomer-monomer_interface"/>
</dbReference>
<dbReference type="NCBIfam" id="TIGR02012">
    <property type="entry name" value="tigrfam_recA"/>
    <property type="match status" value="1"/>
</dbReference>
<dbReference type="PANTHER" id="PTHR45900:SF1">
    <property type="entry name" value="MITOCHONDRIAL DNA REPAIR PROTEIN RECA HOMOLOG-RELATED"/>
    <property type="match status" value="1"/>
</dbReference>
<dbReference type="PANTHER" id="PTHR45900">
    <property type="entry name" value="RECA"/>
    <property type="match status" value="1"/>
</dbReference>
<dbReference type="Pfam" id="PF00154">
    <property type="entry name" value="RecA"/>
    <property type="match status" value="1"/>
</dbReference>
<dbReference type="Pfam" id="PF21096">
    <property type="entry name" value="RecA_C"/>
    <property type="match status" value="1"/>
</dbReference>
<dbReference type="PRINTS" id="PR00142">
    <property type="entry name" value="RECA"/>
</dbReference>
<dbReference type="SMART" id="SM00382">
    <property type="entry name" value="AAA"/>
    <property type="match status" value="1"/>
</dbReference>
<dbReference type="SUPFAM" id="SSF52540">
    <property type="entry name" value="P-loop containing nucleoside triphosphate hydrolases"/>
    <property type="match status" value="1"/>
</dbReference>
<dbReference type="SUPFAM" id="SSF54752">
    <property type="entry name" value="RecA protein, C-terminal domain"/>
    <property type="match status" value="1"/>
</dbReference>
<dbReference type="PROSITE" id="PS00321">
    <property type="entry name" value="RECA_1"/>
    <property type="match status" value="1"/>
</dbReference>
<dbReference type="PROSITE" id="PS50162">
    <property type="entry name" value="RECA_2"/>
    <property type="match status" value="1"/>
</dbReference>
<dbReference type="PROSITE" id="PS50163">
    <property type="entry name" value="RECA_3"/>
    <property type="match status" value="1"/>
</dbReference>
<proteinExistence type="inferred from homology"/>
<comment type="function">
    <text evidence="1">Can catalyze the hydrolysis of ATP in the presence of single-stranded DNA, the ATP-dependent uptake of single-stranded DNA by duplex DNA, and the ATP-dependent hybridization of homologous single-stranded DNAs. It interacts with LexA causing its activation and leading to its autocatalytic cleavage.</text>
</comment>
<comment type="subcellular location">
    <subcellularLocation>
        <location evidence="1">Cytoplasm</location>
    </subcellularLocation>
</comment>
<comment type="similarity">
    <text evidence="1">Belongs to the RecA family.</text>
</comment>
<sequence>MAKDEKKAALEAALKKIEKNFGKGAVMRMGEKVDTQISTVPSGSLALDAALGVGGYPRGRIVEIYGPESSGKTTVALHAVAEVQKRGGTAAYIDAENAMDPAYAEALGVDIDQLILSQPNTGEEGLQIADTLISSGAIDIVVVDSVAALVPRAEIEGEMGDSHVGLQARLMSQALRKLSGTIAKTKTIAIFINQIREKVGVMFGNPETTPGGRALKFYSTIRLEVRRAEQIKQSTNVIGNRVKIKVVKNKVAPPFKVAEVDIMYGQGISQSGELLDMAADQDIVDKAGAWYSYHGEKIGQGRENAKKYLEEHPDVSEDIQTQVRKGLRNRC</sequence>
<keyword id="KW-0067">ATP-binding</keyword>
<keyword id="KW-0963">Cytoplasm</keyword>
<keyword id="KW-0227">DNA damage</keyword>
<keyword id="KW-0233">DNA recombination</keyword>
<keyword id="KW-0234">DNA repair</keyword>
<keyword id="KW-0238">DNA-binding</keyword>
<keyword id="KW-0547">Nucleotide-binding</keyword>
<keyword id="KW-1185">Reference proteome</keyword>
<keyword id="KW-0742">SOS response</keyword>
<organism>
    <name type="scientific">Lactobacillus delbrueckii subsp. bulgaricus (strain ATCC 11842 / DSM 20081 / BCRC 10696 / JCM 1002 / NBRC 13953 / NCIMB 11778 / NCTC 12712 / WDCM 00102 / Lb 14)</name>
    <dbReference type="NCBI Taxonomy" id="390333"/>
    <lineage>
        <taxon>Bacteria</taxon>
        <taxon>Bacillati</taxon>
        <taxon>Bacillota</taxon>
        <taxon>Bacilli</taxon>
        <taxon>Lactobacillales</taxon>
        <taxon>Lactobacillaceae</taxon>
        <taxon>Lactobacillus</taxon>
    </lineage>
</organism>
<evidence type="ECO:0000255" key="1">
    <source>
        <dbReference type="HAMAP-Rule" id="MF_00268"/>
    </source>
</evidence>
<protein>
    <recommendedName>
        <fullName evidence="1">Protein RecA</fullName>
    </recommendedName>
    <alternativeName>
        <fullName evidence="1">Recombinase A</fullName>
    </alternativeName>
</protein>
<feature type="chain" id="PRO_1000047937" description="Protein RecA">
    <location>
        <begin position="1"/>
        <end position="331"/>
    </location>
</feature>
<feature type="binding site" evidence="1">
    <location>
        <begin position="66"/>
        <end position="73"/>
    </location>
    <ligand>
        <name>ATP</name>
        <dbReference type="ChEBI" id="CHEBI:30616"/>
    </ligand>
</feature>
<accession>Q1GB51</accession>